<gene>
    <name type="primary">DPH7</name>
    <name type="synonym">C9orf112</name>
    <name type="synonym">WDR85</name>
</gene>
<reference key="1">
    <citation type="journal article" date="2004" name="Nat. Genet.">
        <title>Complete sequencing and characterization of 21,243 full-length human cDNAs.</title>
        <authorList>
            <person name="Ota T."/>
            <person name="Suzuki Y."/>
            <person name="Nishikawa T."/>
            <person name="Otsuki T."/>
            <person name="Sugiyama T."/>
            <person name="Irie R."/>
            <person name="Wakamatsu A."/>
            <person name="Hayashi K."/>
            <person name="Sato H."/>
            <person name="Nagai K."/>
            <person name="Kimura K."/>
            <person name="Makita H."/>
            <person name="Sekine M."/>
            <person name="Obayashi M."/>
            <person name="Nishi T."/>
            <person name="Shibahara T."/>
            <person name="Tanaka T."/>
            <person name="Ishii S."/>
            <person name="Yamamoto J."/>
            <person name="Saito K."/>
            <person name="Kawai Y."/>
            <person name="Isono Y."/>
            <person name="Nakamura Y."/>
            <person name="Nagahari K."/>
            <person name="Murakami K."/>
            <person name="Yasuda T."/>
            <person name="Iwayanagi T."/>
            <person name="Wagatsuma M."/>
            <person name="Shiratori A."/>
            <person name="Sudo H."/>
            <person name="Hosoiri T."/>
            <person name="Kaku Y."/>
            <person name="Kodaira H."/>
            <person name="Kondo H."/>
            <person name="Sugawara M."/>
            <person name="Takahashi M."/>
            <person name="Kanda K."/>
            <person name="Yokoi T."/>
            <person name="Furuya T."/>
            <person name="Kikkawa E."/>
            <person name="Omura Y."/>
            <person name="Abe K."/>
            <person name="Kamihara K."/>
            <person name="Katsuta N."/>
            <person name="Sato K."/>
            <person name="Tanikawa M."/>
            <person name="Yamazaki M."/>
            <person name="Ninomiya K."/>
            <person name="Ishibashi T."/>
            <person name="Yamashita H."/>
            <person name="Murakawa K."/>
            <person name="Fujimori K."/>
            <person name="Tanai H."/>
            <person name="Kimata M."/>
            <person name="Watanabe M."/>
            <person name="Hiraoka S."/>
            <person name="Chiba Y."/>
            <person name="Ishida S."/>
            <person name="Ono Y."/>
            <person name="Takiguchi S."/>
            <person name="Watanabe S."/>
            <person name="Yosida M."/>
            <person name="Hotuta T."/>
            <person name="Kusano J."/>
            <person name="Kanehori K."/>
            <person name="Takahashi-Fujii A."/>
            <person name="Hara H."/>
            <person name="Tanase T.-O."/>
            <person name="Nomura Y."/>
            <person name="Togiya S."/>
            <person name="Komai F."/>
            <person name="Hara R."/>
            <person name="Takeuchi K."/>
            <person name="Arita M."/>
            <person name="Imose N."/>
            <person name="Musashino K."/>
            <person name="Yuuki H."/>
            <person name="Oshima A."/>
            <person name="Sasaki N."/>
            <person name="Aotsuka S."/>
            <person name="Yoshikawa Y."/>
            <person name="Matsunawa H."/>
            <person name="Ichihara T."/>
            <person name="Shiohata N."/>
            <person name="Sano S."/>
            <person name="Moriya S."/>
            <person name="Momiyama H."/>
            <person name="Satoh N."/>
            <person name="Takami S."/>
            <person name="Terashima Y."/>
            <person name="Suzuki O."/>
            <person name="Nakagawa S."/>
            <person name="Senoh A."/>
            <person name="Mizoguchi H."/>
            <person name="Goto Y."/>
            <person name="Shimizu F."/>
            <person name="Wakebe H."/>
            <person name="Hishigaki H."/>
            <person name="Watanabe T."/>
            <person name="Sugiyama A."/>
            <person name="Takemoto M."/>
            <person name="Kawakami B."/>
            <person name="Yamazaki M."/>
            <person name="Watanabe K."/>
            <person name="Kumagai A."/>
            <person name="Itakura S."/>
            <person name="Fukuzumi Y."/>
            <person name="Fujimori Y."/>
            <person name="Komiyama M."/>
            <person name="Tashiro H."/>
            <person name="Tanigami A."/>
            <person name="Fujiwara T."/>
            <person name="Ono T."/>
            <person name="Yamada K."/>
            <person name="Fujii Y."/>
            <person name="Ozaki K."/>
            <person name="Hirao M."/>
            <person name="Ohmori Y."/>
            <person name="Kawabata A."/>
            <person name="Hikiji T."/>
            <person name="Kobatake N."/>
            <person name="Inagaki H."/>
            <person name="Ikema Y."/>
            <person name="Okamoto S."/>
            <person name="Okitani R."/>
            <person name="Kawakami T."/>
            <person name="Noguchi S."/>
            <person name="Itoh T."/>
            <person name="Shigeta K."/>
            <person name="Senba T."/>
            <person name="Matsumura K."/>
            <person name="Nakajima Y."/>
            <person name="Mizuno T."/>
            <person name="Morinaga M."/>
            <person name="Sasaki M."/>
            <person name="Togashi T."/>
            <person name="Oyama M."/>
            <person name="Hata H."/>
            <person name="Watanabe M."/>
            <person name="Komatsu T."/>
            <person name="Mizushima-Sugano J."/>
            <person name="Satoh T."/>
            <person name="Shirai Y."/>
            <person name="Takahashi Y."/>
            <person name="Nakagawa K."/>
            <person name="Okumura K."/>
            <person name="Nagase T."/>
            <person name="Nomura N."/>
            <person name="Kikuchi H."/>
            <person name="Masuho Y."/>
            <person name="Yamashita R."/>
            <person name="Nakai K."/>
            <person name="Yada T."/>
            <person name="Nakamura Y."/>
            <person name="Ohara O."/>
            <person name="Isogai T."/>
            <person name="Sugano S."/>
        </authorList>
    </citation>
    <scope>NUCLEOTIDE SEQUENCE [LARGE SCALE MRNA]</scope>
    <source>
        <tissue>Placenta</tissue>
    </source>
</reference>
<reference key="2">
    <citation type="journal article" date="2004" name="Nature">
        <title>DNA sequence and analysis of human chromosome 9.</title>
        <authorList>
            <person name="Humphray S.J."/>
            <person name="Oliver K."/>
            <person name="Hunt A.R."/>
            <person name="Plumb R.W."/>
            <person name="Loveland J.E."/>
            <person name="Howe K.L."/>
            <person name="Andrews T.D."/>
            <person name="Searle S."/>
            <person name="Hunt S.E."/>
            <person name="Scott C.E."/>
            <person name="Jones M.C."/>
            <person name="Ainscough R."/>
            <person name="Almeida J.P."/>
            <person name="Ambrose K.D."/>
            <person name="Ashwell R.I.S."/>
            <person name="Babbage A.K."/>
            <person name="Babbage S."/>
            <person name="Bagguley C.L."/>
            <person name="Bailey J."/>
            <person name="Banerjee R."/>
            <person name="Barker D.J."/>
            <person name="Barlow K.F."/>
            <person name="Bates K."/>
            <person name="Beasley H."/>
            <person name="Beasley O."/>
            <person name="Bird C.P."/>
            <person name="Bray-Allen S."/>
            <person name="Brown A.J."/>
            <person name="Brown J.Y."/>
            <person name="Burford D."/>
            <person name="Burrill W."/>
            <person name="Burton J."/>
            <person name="Carder C."/>
            <person name="Carter N.P."/>
            <person name="Chapman J.C."/>
            <person name="Chen Y."/>
            <person name="Clarke G."/>
            <person name="Clark S.Y."/>
            <person name="Clee C.M."/>
            <person name="Clegg S."/>
            <person name="Collier R.E."/>
            <person name="Corby N."/>
            <person name="Crosier M."/>
            <person name="Cummings A.T."/>
            <person name="Davies J."/>
            <person name="Dhami P."/>
            <person name="Dunn M."/>
            <person name="Dutta I."/>
            <person name="Dyer L.W."/>
            <person name="Earthrowl M.E."/>
            <person name="Faulkner L."/>
            <person name="Fleming C.J."/>
            <person name="Frankish A."/>
            <person name="Frankland J.A."/>
            <person name="French L."/>
            <person name="Fricker D.G."/>
            <person name="Garner P."/>
            <person name="Garnett J."/>
            <person name="Ghori J."/>
            <person name="Gilbert J.G.R."/>
            <person name="Glison C."/>
            <person name="Grafham D.V."/>
            <person name="Gribble S."/>
            <person name="Griffiths C."/>
            <person name="Griffiths-Jones S."/>
            <person name="Grocock R."/>
            <person name="Guy J."/>
            <person name="Hall R.E."/>
            <person name="Hammond S."/>
            <person name="Harley J.L."/>
            <person name="Harrison E.S.I."/>
            <person name="Hart E.A."/>
            <person name="Heath P.D."/>
            <person name="Henderson C.D."/>
            <person name="Hopkins B.L."/>
            <person name="Howard P.J."/>
            <person name="Howden P.J."/>
            <person name="Huckle E."/>
            <person name="Johnson C."/>
            <person name="Johnson D."/>
            <person name="Joy A.A."/>
            <person name="Kay M."/>
            <person name="Keenan S."/>
            <person name="Kershaw J.K."/>
            <person name="Kimberley A.M."/>
            <person name="King A."/>
            <person name="Knights A."/>
            <person name="Laird G.K."/>
            <person name="Langford C."/>
            <person name="Lawlor S."/>
            <person name="Leongamornlert D.A."/>
            <person name="Leversha M."/>
            <person name="Lloyd C."/>
            <person name="Lloyd D.M."/>
            <person name="Lovell J."/>
            <person name="Martin S."/>
            <person name="Mashreghi-Mohammadi M."/>
            <person name="Matthews L."/>
            <person name="McLaren S."/>
            <person name="McLay K.E."/>
            <person name="McMurray A."/>
            <person name="Milne S."/>
            <person name="Nickerson T."/>
            <person name="Nisbett J."/>
            <person name="Nordsiek G."/>
            <person name="Pearce A.V."/>
            <person name="Peck A.I."/>
            <person name="Porter K.M."/>
            <person name="Pandian R."/>
            <person name="Pelan S."/>
            <person name="Phillimore B."/>
            <person name="Povey S."/>
            <person name="Ramsey Y."/>
            <person name="Rand V."/>
            <person name="Scharfe M."/>
            <person name="Sehra H.K."/>
            <person name="Shownkeen R."/>
            <person name="Sims S.K."/>
            <person name="Skuce C.D."/>
            <person name="Smith M."/>
            <person name="Steward C.A."/>
            <person name="Swarbreck D."/>
            <person name="Sycamore N."/>
            <person name="Tester J."/>
            <person name="Thorpe A."/>
            <person name="Tracey A."/>
            <person name="Tromans A."/>
            <person name="Thomas D.W."/>
            <person name="Wall M."/>
            <person name="Wallis J.M."/>
            <person name="West A.P."/>
            <person name="Whitehead S.L."/>
            <person name="Willey D.L."/>
            <person name="Williams S.A."/>
            <person name="Wilming L."/>
            <person name="Wray P.W."/>
            <person name="Young L."/>
            <person name="Ashurst J.L."/>
            <person name="Coulson A."/>
            <person name="Blocker H."/>
            <person name="Durbin R.M."/>
            <person name="Sulston J.E."/>
            <person name="Hubbard T."/>
            <person name="Jackson M.J."/>
            <person name="Bentley D.R."/>
            <person name="Beck S."/>
            <person name="Rogers J."/>
            <person name="Dunham I."/>
        </authorList>
    </citation>
    <scope>NUCLEOTIDE SEQUENCE [LARGE SCALE GENOMIC DNA]</scope>
</reference>
<reference key="3">
    <citation type="journal article" date="2004" name="Genome Res.">
        <title>The status, quality, and expansion of the NIH full-length cDNA project: the Mammalian Gene Collection (MGC).</title>
        <authorList>
            <consortium name="The MGC Project Team"/>
        </authorList>
    </citation>
    <scope>NUCLEOTIDE SEQUENCE [LARGE SCALE MRNA]</scope>
    <source>
        <tissue>Brain</tissue>
        <tissue>Skin</tissue>
    </source>
</reference>
<reference key="4">
    <citation type="journal article" date="2009" name="Science">
        <title>Haploid genetic screens in human cells identify host factors used by pathogens.</title>
        <authorList>
            <person name="Carette J.E."/>
            <person name="Guimaraes C.P."/>
            <person name="Varadarajan M."/>
            <person name="Park A.S."/>
            <person name="Wuethrich I."/>
            <person name="Godarova A."/>
            <person name="Kotecki M."/>
            <person name="Cochran B.H."/>
            <person name="Spooner E."/>
            <person name="Ploegh H.L."/>
            <person name="Brummelkamp T.R."/>
        </authorList>
    </citation>
    <scope>FUNCTION</scope>
</reference>
<reference key="5">
    <citation type="journal article" date="2013" name="J. Biol. Chem.">
        <title>A modified form of diphthamide causes immunotoxin resistance in a lymphoma cell line with a deletion of the WDR85 gene.</title>
        <authorList>
            <person name="Wei H."/>
            <person name="Bera T.K."/>
            <person name="Wayne A.S."/>
            <person name="Xiang L."/>
            <person name="Colantonio S."/>
            <person name="Chertov O."/>
            <person name="Pastan I."/>
        </authorList>
    </citation>
    <scope>FUNCTION IN DIPHTHAMIDE BIOSYNTHESIS</scope>
</reference>
<reference key="6">
    <citation type="journal article" date="2013" name="J. Proteome Res.">
        <title>Toward a comprehensive characterization of a human cancer cell phosphoproteome.</title>
        <authorList>
            <person name="Zhou H."/>
            <person name="Di Palma S."/>
            <person name="Preisinger C."/>
            <person name="Peng M."/>
            <person name="Polat A.N."/>
            <person name="Heck A.J."/>
            <person name="Mohammed S."/>
        </authorList>
    </citation>
    <scope>PHOSPHORYLATION [LARGE SCALE ANALYSIS] AT SER-353</scope>
    <scope>IDENTIFICATION BY MASS SPECTROMETRY [LARGE SCALE ANALYSIS]</scope>
    <source>
        <tissue>Erythroleukemia</tissue>
    </source>
</reference>
<reference key="7">
    <citation type="journal article" date="2011" name="PLoS ONE">
        <title>The inhibitor of growth protein 5 (ING5) depends on INCA1 as a co-factor for its antiproliferative effects.</title>
        <authorList>
            <person name="Zhang F."/>
            <person name="Baeumer N."/>
            <person name="Rode M."/>
            <person name="Ji P."/>
            <person name="Zhang T."/>
            <person name="Berdel W.E."/>
            <person name="Mueller-Tidow C."/>
        </authorList>
    </citation>
    <scope>INTERACTION WITH INCA1</scope>
</reference>
<protein>
    <recommendedName>
        <fullName>Diphthine methyltransferase</fullName>
        <ecNumber>3.1.1.97</ecNumber>
    </recommendedName>
    <alternativeName>
        <fullName>Diphthamide biosynthesis protein 7</fullName>
    </alternativeName>
    <alternativeName>
        <fullName>WD repeat-containing protein 85</fullName>
    </alternativeName>
</protein>
<keyword id="KW-0378">Hydrolase</keyword>
<keyword id="KW-0597">Phosphoprotein</keyword>
<keyword id="KW-1267">Proteomics identification</keyword>
<keyword id="KW-1185">Reference proteome</keyword>
<keyword id="KW-0677">Repeat</keyword>
<keyword id="KW-0853">WD repeat</keyword>
<comment type="function">
    <text evidence="1 3 5">Catalyzes the demethylation of diphthine methyl ester to form diphthine, an intermediate diphthamide biosynthesis, a post-translational modification of histidine which occurs in translation elongation factor 2 (EEF2) which can be ADP-ribosylated by diphtheria toxin and by Pseudomonas exotoxin A (Eta).</text>
</comment>
<comment type="catalytic activity">
    <reaction evidence="1">
        <text>diphthine methyl ester-[translation elongation factor 2] + H2O = diphthine-[translation elongation factor 2] + methanol + H(+)</text>
        <dbReference type="Rhea" id="RHEA:42656"/>
        <dbReference type="Rhea" id="RHEA-COMP:10172"/>
        <dbReference type="Rhea" id="RHEA-COMP:10173"/>
        <dbReference type="ChEBI" id="CHEBI:15377"/>
        <dbReference type="ChEBI" id="CHEBI:15378"/>
        <dbReference type="ChEBI" id="CHEBI:17790"/>
        <dbReference type="ChEBI" id="CHEBI:79005"/>
        <dbReference type="ChEBI" id="CHEBI:82696"/>
        <dbReference type="EC" id="3.1.1.97"/>
    </reaction>
</comment>
<comment type="pathway">
    <text>Protein modification; peptidyl-diphthamide biosynthesis.</text>
</comment>
<comment type="subunit">
    <text evidence="4">Interacts with INCA1.</text>
</comment>
<comment type="interaction">
    <interactant intactId="EBI-11059920">
        <id>Q9BTV6</id>
    </interactant>
    <interactant intactId="EBI-6509505">
        <id>Q0VD86</id>
        <label>INCA1</label>
    </interactant>
    <organismsDiffer>false</organismsDiffer>
    <experiments>2</experiments>
</comment>
<comment type="similarity">
    <text evidence="6">Belongs to the DPH7 family.</text>
</comment>
<name>DPH7_HUMAN</name>
<sequence length="452" mass="50575">MMGCFALQTVDTELTADSVEWCPLQGCRHLLACGTYQLRRPEDRPAGPQNKGGMEVKEPQVRLGRLFLYSFNDNNSIHPLVEVQRKDTSAILDMKWCHIPVAGHALLGLADASGSIQLLRLVESEKSHVLEPLSSLALEEQCLALSLDWSTGKTGRAGDQPLKIISSDSTGQLHLLMVNETRPRLQKVASWQAHQFEAWIAAFNYWHPEIVYSGGDDGLLRGWDTRVPGKFLFTSKRHTMGVCSIQSSPHREHILATGSYDEHILLWDTRNMKQPLADTPVQGGVWRIKWHPFHHHLLLAACMHSGFKILNCQKAMEERQEATVLTSHTLPDSLVYGADWSWLLFRSLQRAPSWSFPSNLGTKTADLKGASELPTPCHECREDNDGEGHARPQSGMKPLTEGMRKNGTWLQATAATTRDCGVNPEEADSAFSLLATCSFYDHALHLWEWEGN</sequence>
<dbReference type="EC" id="3.1.1.97"/>
<dbReference type="EMBL" id="AK075115">
    <property type="protein sequence ID" value="BAC11411.1"/>
    <property type="molecule type" value="mRNA"/>
</dbReference>
<dbReference type="EMBL" id="AL365502">
    <property type="status" value="NOT_ANNOTATED_CDS"/>
    <property type="molecule type" value="Genomic_DNA"/>
</dbReference>
<dbReference type="EMBL" id="BC003123">
    <property type="protein sequence ID" value="AAH03123.2"/>
    <property type="molecule type" value="mRNA"/>
</dbReference>
<dbReference type="EMBL" id="BC017335">
    <property type="protein sequence ID" value="AAH17335.1"/>
    <property type="molecule type" value="mRNA"/>
</dbReference>
<dbReference type="CCDS" id="CCDS7047.1"/>
<dbReference type="RefSeq" id="NP_620133.1">
    <property type="nucleotide sequence ID" value="NM_138778.5"/>
</dbReference>
<dbReference type="SMR" id="Q9BTV6"/>
<dbReference type="BioGRID" id="124971">
    <property type="interactions" value="22"/>
</dbReference>
<dbReference type="FunCoup" id="Q9BTV6">
    <property type="interactions" value="2012"/>
</dbReference>
<dbReference type="IntAct" id="Q9BTV6">
    <property type="interactions" value="13"/>
</dbReference>
<dbReference type="STRING" id="9606.ENSP00000277540"/>
<dbReference type="GlyGen" id="Q9BTV6">
    <property type="glycosylation" value="1 site, 1 O-linked glycan (1 site)"/>
</dbReference>
<dbReference type="iPTMnet" id="Q9BTV6"/>
<dbReference type="PhosphoSitePlus" id="Q9BTV6"/>
<dbReference type="BioMuta" id="DPH7"/>
<dbReference type="DMDM" id="68565266"/>
<dbReference type="jPOST" id="Q9BTV6"/>
<dbReference type="MassIVE" id="Q9BTV6"/>
<dbReference type="PaxDb" id="9606-ENSP00000277540"/>
<dbReference type="PeptideAtlas" id="Q9BTV6"/>
<dbReference type="ProteomicsDB" id="79014"/>
<dbReference type="Pumba" id="Q9BTV6"/>
<dbReference type="Antibodypedia" id="19075">
    <property type="antibodies" value="106 antibodies from 19 providers"/>
</dbReference>
<dbReference type="DNASU" id="92715"/>
<dbReference type="Ensembl" id="ENST00000277540.7">
    <property type="protein sequence ID" value="ENSP00000277540.2"/>
    <property type="gene ID" value="ENSG00000148399.13"/>
</dbReference>
<dbReference type="GeneID" id="92715"/>
<dbReference type="KEGG" id="hsa:92715"/>
<dbReference type="MANE-Select" id="ENST00000277540.7">
    <property type="protein sequence ID" value="ENSP00000277540.2"/>
    <property type="RefSeq nucleotide sequence ID" value="NM_138778.5"/>
    <property type="RefSeq protein sequence ID" value="NP_620133.1"/>
</dbReference>
<dbReference type="UCSC" id="uc004cnk.1">
    <property type="organism name" value="human"/>
</dbReference>
<dbReference type="AGR" id="HGNC:25199"/>
<dbReference type="CTD" id="92715"/>
<dbReference type="DisGeNET" id="92715"/>
<dbReference type="GeneCards" id="DPH7"/>
<dbReference type="HGNC" id="HGNC:25199">
    <property type="gene designation" value="DPH7"/>
</dbReference>
<dbReference type="HPA" id="ENSG00000148399">
    <property type="expression patterns" value="Low tissue specificity"/>
</dbReference>
<dbReference type="MalaCards" id="DPH7"/>
<dbReference type="MIM" id="613210">
    <property type="type" value="gene"/>
</dbReference>
<dbReference type="neXtProt" id="NX_Q9BTV6"/>
<dbReference type="OpenTargets" id="ENSG00000148399"/>
<dbReference type="PharmGKB" id="PA134942088"/>
<dbReference type="VEuPathDB" id="HostDB:ENSG00000148399"/>
<dbReference type="eggNOG" id="KOG0280">
    <property type="taxonomic scope" value="Eukaryota"/>
</dbReference>
<dbReference type="GeneTree" id="ENSGT00390000018644"/>
<dbReference type="HOGENOM" id="CLU_036100_2_1_1"/>
<dbReference type="InParanoid" id="Q9BTV6"/>
<dbReference type="OMA" id="LDMKWLP"/>
<dbReference type="OrthoDB" id="1930760at2759"/>
<dbReference type="PAN-GO" id="Q9BTV6">
    <property type="GO annotations" value="3 GO annotations based on evolutionary models"/>
</dbReference>
<dbReference type="PhylomeDB" id="Q9BTV6"/>
<dbReference type="TreeFam" id="TF324407"/>
<dbReference type="BRENDA" id="3.1.1.97">
    <property type="organism ID" value="2681"/>
</dbReference>
<dbReference type="PathwayCommons" id="Q9BTV6"/>
<dbReference type="Reactome" id="R-HSA-5358493">
    <property type="pathway name" value="Synthesis of diphthamide-EEF2"/>
</dbReference>
<dbReference type="SignaLink" id="Q9BTV6"/>
<dbReference type="UniPathway" id="UPA00559"/>
<dbReference type="BioGRID-ORCS" id="92715">
    <property type="hits" value="32 hits in 1145 CRISPR screens"/>
</dbReference>
<dbReference type="ChiTaRS" id="DPH7">
    <property type="organism name" value="human"/>
</dbReference>
<dbReference type="GenomeRNAi" id="92715"/>
<dbReference type="Pharos" id="Q9BTV6">
    <property type="development level" value="Tbio"/>
</dbReference>
<dbReference type="PRO" id="PR:Q9BTV6"/>
<dbReference type="Proteomes" id="UP000005640">
    <property type="component" value="Chromosome 9"/>
</dbReference>
<dbReference type="RNAct" id="Q9BTV6">
    <property type="molecule type" value="protein"/>
</dbReference>
<dbReference type="Bgee" id="ENSG00000148399">
    <property type="expression patterns" value="Expressed in right uterine tube and 143 other cell types or tissues"/>
</dbReference>
<dbReference type="GO" id="GO:0005737">
    <property type="term" value="C:cytoplasm"/>
    <property type="evidence" value="ECO:0000318"/>
    <property type="project" value="GO_Central"/>
</dbReference>
<dbReference type="GO" id="GO:0061685">
    <property type="term" value="F:diphthine methylesterase activity"/>
    <property type="evidence" value="ECO:0000318"/>
    <property type="project" value="GO_Central"/>
</dbReference>
<dbReference type="GO" id="GO:0017183">
    <property type="term" value="P:protein histidyl modification to diphthamide"/>
    <property type="evidence" value="ECO:0000315"/>
    <property type="project" value="UniProtKB"/>
</dbReference>
<dbReference type="FunFam" id="2.130.10.10:FF:000910">
    <property type="entry name" value="Diphthamide biosynthesis 7"/>
    <property type="match status" value="1"/>
</dbReference>
<dbReference type="Gene3D" id="2.130.10.10">
    <property type="entry name" value="YVTN repeat-like/Quinoprotein amine dehydrogenase"/>
    <property type="match status" value="1"/>
</dbReference>
<dbReference type="InterPro" id="IPR052415">
    <property type="entry name" value="Diphthine_MTase"/>
</dbReference>
<dbReference type="InterPro" id="IPR015943">
    <property type="entry name" value="WD40/YVTN_repeat-like_dom_sf"/>
</dbReference>
<dbReference type="InterPro" id="IPR019775">
    <property type="entry name" value="WD40_repeat_CS"/>
</dbReference>
<dbReference type="InterPro" id="IPR036322">
    <property type="entry name" value="WD40_repeat_dom_sf"/>
</dbReference>
<dbReference type="InterPro" id="IPR001680">
    <property type="entry name" value="WD40_rpt"/>
</dbReference>
<dbReference type="PANTHER" id="PTHR46042">
    <property type="entry name" value="DIPHTHINE METHYLTRANSFERASE"/>
    <property type="match status" value="1"/>
</dbReference>
<dbReference type="PANTHER" id="PTHR46042:SF1">
    <property type="entry name" value="DIPHTHINE METHYLTRANSFERASE"/>
    <property type="match status" value="1"/>
</dbReference>
<dbReference type="Pfam" id="PF00400">
    <property type="entry name" value="WD40"/>
    <property type="match status" value="1"/>
</dbReference>
<dbReference type="SMART" id="SM00320">
    <property type="entry name" value="WD40"/>
    <property type="match status" value="3"/>
</dbReference>
<dbReference type="SUPFAM" id="SSF50978">
    <property type="entry name" value="WD40 repeat-like"/>
    <property type="match status" value="1"/>
</dbReference>
<dbReference type="PROSITE" id="PS00678">
    <property type="entry name" value="WD_REPEATS_1"/>
    <property type="match status" value="2"/>
</dbReference>
<dbReference type="PROSITE" id="PS50082">
    <property type="entry name" value="WD_REPEATS_2"/>
    <property type="match status" value="1"/>
</dbReference>
<dbReference type="PROSITE" id="PS50294">
    <property type="entry name" value="WD_REPEATS_REGION"/>
    <property type="match status" value="1"/>
</dbReference>
<evidence type="ECO:0000250" key="1">
    <source>
        <dbReference type="UniProtKB" id="P38332"/>
    </source>
</evidence>
<evidence type="ECO:0000256" key="2">
    <source>
        <dbReference type="SAM" id="MobiDB-lite"/>
    </source>
</evidence>
<evidence type="ECO:0000269" key="3">
    <source>
    </source>
</evidence>
<evidence type="ECO:0000269" key="4">
    <source>
    </source>
</evidence>
<evidence type="ECO:0000269" key="5">
    <source>
    </source>
</evidence>
<evidence type="ECO:0000305" key="6"/>
<evidence type="ECO:0007744" key="7">
    <source>
    </source>
</evidence>
<organism>
    <name type="scientific">Homo sapiens</name>
    <name type="common">Human</name>
    <dbReference type="NCBI Taxonomy" id="9606"/>
    <lineage>
        <taxon>Eukaryota</taxon>
        <taxon>Metazoa</taxon>
        <taxon>Chordata</taxon>
        <taxon>Craniata</taxon>
        <taxon>Vertebrata</taxon>
        <taxon>Euteleostomi</taxon>
        <taxon>Mammalia</taxon>
        <taxon>Eutheria</taxon>
        <taxon>Euarchontoglires</taxon>
        <taxon>Primates</taxon>
        <taxon>Haplorrhini</taxon>
        <taxon>Catarrhini</taxon>
        <taxon>Hominidae</taxon>
        <taxon>Homo</taxon>
    </lineage>
</organism>
<proteinExistence type="evidence at protein level"/>
<feature type="chain" id="PRO_0000050906" description="Diphthine methyltransferase">
    <location>
        <begin position="1"/>
        <end position="452"/>
    </location>
</feature>
<feature type="repeat" description="WD 1">
    <location>
        <begin position="79"/>
        <end position="130"/>
    </location>
</feature>
<feature type="repeat" description="WD 2">
    <location>
        <begin position="131"/>
        <end position="185"/>
    </location>
</feature>
<feature type="repeat" description="WD 3">
    <location>
        <begin position="186"/>
        <end position="229"/>
    </location>
</feature>
<feature type="repeat" description="WD 4">
    <location>
        <begin position="230"/>
        <end position="273"/>
    </location>
</feature>
<feature type="repeat" description="WD 5">
    <location>
        <begin position="274"/>
        <end position="313"/>
    </location>
</feature>
<feature type="repeat" description="WD 6">
    <location>
        <begin position="314"/>
        <end position="403"/>
    </location>
</feature>
<feature type="repeat" description="WD 7">
    <location>
        <begin position="404"/>
        <end position="448"/>
    </location>
</feature>
<feature type="region of interest" description="Disordered" evidence="2">
    <location>
        <begin position="371"/>
        <end position="402"/>
    </location>
</feature>
<feature type="compositionally biased region" description="Basic and acidic residues" evidence="2">
    <location>
        <begin position="378"/>
        <end position="390"/>
    </location>
</feature>
<feature type="modified residue" description="Phosphoserine" evidence="7">
    <location>
        <position position="353"/>
    </location>
</feature>
<feature type="sequence variant" id="VAR_053437" description="In dbSNP:rs821314.">
    <original>G</original>
    <variation>R</variation>
    <location>
        <position position="158"/>
    </location>
</feature>
<accession>Q9BTV6</accession>
<accession>Q96AB7</accession>